<sequence>MSEQNNTEMTFQIQRIYTKDISFEAPNAPHVFQKDWQPEVKLDLDTASSQLADDVYEVVLRVTVTASLGEETAFLCEVQQGGIFSIAGIEGTQMAHCLGAYCPNILFPYARECITSMVSRGTFPQLNLAPVNFDALFMNYLQQQAGEGTEEHQDA</sequence>
<proteinExistence type="inferred from homology"/>
<keyword id="KW-0143">Chaperone</keyword>
<keyword id="KW-0963">Cytoplasm</keyword>
<keyword id="KW-0653">Protein transport</keyword>
<keyword id="KW-1185">Reference proteome</keyword>
<keyword id="KW-0811">Translocation</keyword>
<keyword id="KW-0813">Transport</keyword>
<evidence type="ECO:0000255" key="1">
    <source>
        <dbReference type="HAMAP-Rule" id="MF_00821"/>
    </source>
</evidence>
<protein>
    <recommendedName>
        <fullName evidence="1">Protein-export protein SecB</fullName>
    </recommendedName>
</protein>
<organism>
    <name type="scientific">Escherichia coli O139:H28 (strain E24377A / ETEC)</name>
    <dbReference type="NCBI Taxonomy" id="331111"/>
    <lineage>
        <taxon>Bacteria</taxon>
        <taxon>Pseudomonadati</taxon>
        <taxon>Pseudomonadota</taxon>
        <taxon>Gammaproteobacteria</taxon>
        <taxon>Enterobacterales</taxon>
        <taxon>Enterobacteriaceae</taxon>
        <taxon>Escherichia</taxon>
    </lineage>
</organism>
<accession>A7ZTG3</accession>
<comment type="function">
    <text evidence="1">One of the proteins required for the normal export of preproteins out of the cell cytoplasm. It is a molecular chaperone that binds to a subset of precursor proteins, maintaining them in a translocation-competent state. It also specifically binds to its receptor SecA.</text>
</comment>
<comment type="subunit">
    <text evidence="1">Homotetramer, a dimer of dimers. One homotetramer interacts with 1 SecA dimer.</text>
</comment>
<comment type="subcellular location">
    <subcellularLocation>
        <location evidence="1">Cytoplasm</location>
    </subcellularLocation>
</comment>
<comment type="similarity">
    <text evidence="1">Belongs to the SecB family.</text>
</comment>
<dbReference type="EMBL" id="CP000800">
    <property type="protein sequence ID" value="ABV18180.1"/>
    <property type="molecule type" value="Genomic_DNA"/>
</dbReference>
<dbReference type="RefSeq" id="WP_000003377.1">
    <property type="nucleotide sequence ID" value="NC_009801.1"/>
</dbReference>
<dbReference type="SMR" id="A7ZTG3"/>
<dbReference type="GeneID" id="86944403"/>
<dbReference type="KEGG" id="ecw:EcE24377A_4113"/>
<dbReference type="HOGENOM" id="CLU_111574_1_0_6"/>
<dbReference type="Proteomes" id="UP000001122">
    <property type="component" value="Chromosome"/>
</dbReference>
<dbReference type="GO" id="GO:0005737">
    <property type="term" value="C:cytoplasm"/>
    <property type="evidence" value="ECO:0007669"/>
    <property type="project" value="UniProtKB-SubCell"/>
</dbReference>
<dbReference type="GO" id="GO:0051082">
    <property type="term" value="F:unfolded protein binding"/>
    <property type="evidence" value="ECO:0007669"/>
    <property type="project" value="InterPro"/>
</dbReference>
<dbReference type="GO" id="GO:0006457">
    <property type="term" value="P:protein folding"/>
    <property type="evidence" value="ECO:0007669"/>
    <property type="project" value="UniProtKB-UniRule"/>
</dbReference>
<dbReference type="GO" id="GO:0051262">
    <property type="term" value="P:protein tetramerization"/>
    <property type="evidence" value="ECO:0007669"/>
    <property type="project" value="InterPro"/>
</dbReference>
<dbReference type="GO" id="GO:0015031">
    <property type="term" value="P:protein transport"/>
    <property type="evidence" value="ECO:0007669"/>
    <property type="project" value="UniProtKB-UniRule"/>
</dbReference>
<dbReference type="CDD" id="cd00557">
    <property type="entry name" value="Translocase_SecB"/>
    <property type="match status" value="1"/>
</dbReference>
<dbReference type="FunFam" id="3.10.420.10:FF:000001">
    <property type="entry name" value="Protein-export chaperone SecB"/>
    <property type="match status" value="1"/>
</dbReference>
<dbReference type="Gene3D" id="3.10.420.10">
    <property type="entry name" value="SecB-like"/>
    <property type="match status" value="1"/>
</dbReference>
<dbReference type="HAMAP" id="MF_00821">
    <property type="entry name" value="SecB"/>
    <property type="match status" value="1"/>
</dbReference>
<dbReference type="InterPro" id="IPR003708">
    <property type="entry name" value="SecB"/>
</dbReference>
<dbReference type="InterPro" id="IPR035958">
    <property type="entry name" value="SecB-like_sf"/>
</dbReference>
<dbReference type="NCBIfam" id="NF004390">
    <property type="entry name" value="PRK05751.1-1"/>
    <property type="match status" value="1"/>
</dbReference>
<dbReference type="NCBIfam" id="NF004393">
    <property type="entry name" value="PRK05751.1-4"/>
    <property type="match status" value="1"/>
</dbReference>
<dbReference type="NCBIfam" id="TIGR00809">
    <property type="entry name" value="secB"/>
    <property type="match status" value="1"/>
</dbReference>
<dbReference type="PANTHER" id="PTHR36918">
    <property type="match status" value="1"/>
</dbReference>
<dbReference type="PANTHER" id="PTHR36918:SF1">
    <property type="entry name" value="PROTEIN-EXPORT PROTEIN SECB"/>
    <property type="match status" value="1"/>
</dbReference>
<dbReference type="Pfam" id="PF02556">
    <property type="entry name" value="SecB"/>
    <property type="match status" value="1"/>
</dbReference>
<dbReference type="PRINTS" id="PR01594">
    <property type="entry name" value="SECBCHAPRONE"/>
</dbReference>
<dbReference type="SUPFAM" id="SSF54611">
    <property type="entry name" value="SecB-like"/>
    <property type="match status" value="1"/>
</dbReference>
<reference key="1">
    <citation type="journal article" date="2008" name="J. Bacteriol.">
        <title>The pangenome structure of Escherichia coli: comparative genomic analysis of E. coli commensal and pathogenic isolates.</title>
        <authorList>
            <person name="Rasko D.A."/>
            <person name="Rosovitz M.J."/>
            <person name="Myers G.S.A."/>
            <person name="Mongodin E.F."/>
            <person name="Fricke W.F."/>
            <person name="Gajer P."/>
            <person name="Crabtree J."/>
            <person name="Sebaihia M."/>
            <person name="Thomson N.R."/>
            <person name="Chaudhuri R."/>
            <person name="Henderson I.R."/>
            <person name="Sperandio V."/>
            <person name="Ravel J."/>
        </authorList>
    </citation>
    <scope>NUCLEOTIDE SEQUENCE [LARGE SCALE GENOMIC DNA]</scope>
    <source>
        <strain>E24377A / ETEC</strain>
    </source>
</reference>
<gene>
    <name evidence="1" type="primary">secB</name>
    <name type="ordered locus">EcE24377A_4113</name>
</gene>
<feature type="chain" id="PRO_1000062471" description="Protein-export protein SecB">
    <location>
        <begin position="1"/>
        <end position="155"/>
    </location>
</feature>
<name>SECB_ECO24</name>